<sequence length="319" mass="35133">MNPNYLDFEQPIADLEAKIQELRNASAGPAVNVEAEVHALQDKLRMRTAQIFRNLTSWQVLQLARHPSRPYTADYLRVMFDEFQELAGDRAFADDKAIMGGLARINGRAVMVIGHQKGRDTKEKIKRNFGMPKPEGYRKALRLMKMAERFGLPVLTLIDTAGAWPGIDAESRGQSEAIARNLIEMAELKVPIICTVIGEGGSGGALALGVGDRTVMLEYAVYSTITPEGCASILWKDAGKAKDAAEQLGLTAPRLKSLGLVDKVVREPTGGAHRNPTQMAKRLKAVLLNELDALDKLSTEQLLEQRYARLRSYGTYEAA</sequence>
<name>ACCA_STRMK</name>
<organism>
    <name type="scientific">Stenotrophomonas maltophilia (strain K279a)</name>
    <dbReference type="NCBI Taxonomy" id="522373"/>
    <lineage>
        <taxon>Bacteria</taxon>
        <taxon>Pseudomonadati</taxon>
        <taxon>Pseudomonadota</taxon>
        <taxon>Gammaproteobacteria</taxon>
        <taxon>Lysobacterales</taxon>
        <taxon>Lysobacteraceae</taxon>
        <taxon>Stenotrophomonas</taxon>
        <taxon>Stenotrophomonas maltophilia group</taxon>
    </lineage>
</organism>
<protein>
    <recommendedName>
        <fullName evidence="1">Acetyl-coenzyme A carboxylase carboxyl transferase subunit alpha</fullName>
        <shortName evidence="1">ACCase subunit alpha</shortName>
        <shortName evidence="1">Acetyl-CoA carboxylase carboxyltransferase subunit alpha</shortName>
        <ecNumber evidence="1">2.1.3.15</ecNumber>
    </recommendedName>
</protein>
<reference key="1">
    <citation type="journal article" date="2008" name="Genome Biol.">
        <title>The complete genome, comparative and functional analysis of Stenotrophomonas maltophilia reveals an organism heavily shielded by drug resistance determinants.</title>
        <authorList>
            <person name="Crossman L.C."/>
            <person name="Gould V.C."/>
            <person name="Dow J.M."/>
            <person name="Vernikos G.S."/>
            <person name="Okazaki A."/>
            <person name="Sebaihia M."/>
            <person name="Saunders D."/>
            <person name="Arrowsmith C."/>
            <person name="Carver T."/>
            <person name="Peters N."/>
            <person name="Adlem E."/>
            <person name="Kerhornou A."/>
            <person name="Lord A."/>
            <person name="Murphy L."/>
            <person name="Seeger K."/>
            <person name="Squares R."/>
            <person name="Rutter S."/>
            <person name="Quail M.A."/>
            <person name="Rajandream M.A."/>
            <person name="Harris D."/>
            <person name="Churcher C."/>
            <person name="Bentley S.D."/>
            <person name="Parkhill J."/>
            <person name="Thomson N.R."/>
            <person name="Avison M.B."/>
        </authorList>
    </citation>
    <scope>NUCLEOTIDE SEQUENCE [LARGE SCALE GENOMIC DNA]</scope>
    <source>
        <strain>K279a</strain>
    </source>
</reference>
<proteinExistence type="inferred from homology"/>
<dbReference type="EC" id="2.1.3.15" evidence="1"/>
<dbReference type="EMBL" id="AM743169">
    <property type="protein sequence ID" value="CAQ45026.1"/>
    <property type="molecule type" value="Genomic_DNA"/>
</dbReference>
<dbReference type="RefSeq" id="WP_005408731.1">
    <property type="nucleotide sequence ID" value="NC_010943.1"/>
</dbReference>
<dbReference type="SMR" id="B2FHN1"/>
<dbReference type="EnsemblBacteria" id="CAQ45026">
    <property type="protein sequence ID" value="CAQ45026"/>
    <property type="gene ID" value="Smlt1490"/>
</dbReference>
<dbReference type="KEGG" id="sml:Smlt1490"/>
<dbReference type="eggNOG" id="COG0825">
    <property type="taxonomic scope" value="Bacteria"/>
</dbReference>
<dbReference type="HOGENOM" id="CLU_015486_0_2_6"/>
<dbReference type="UniPathway" id="UPA00655">
    <property type="reaction ID" value="UER00711"/>
</dbReference>
<dbReference type="Proteomes" id="UP000008840">
    <property type="component" value="Chromosome"/>
</dbReference>
<dbReference type="GO" id="GO:0009317">
    <property type="term" value="C:acetyl-CoA carboxylase complex"/>
    <property type="evidence" value="ECO:0007669"/>
    <property type="project" value="InterPro"/>
</dbReference>
<dbReference type="GO" id="GO:0003989">
    <property type="term" value="F:acetyl-CoA carboxylase activity"/>
    <property type="evidence" value="ECO:0007669"/>
    <property type="project" value="InterPro"/>
</dbReference>
<dbReference type="GO" id="GO:0005524">
    <property type="term" value="F:ATP binding"/>
    <property type="evidence" value="ECO:0007669"/>
    <property type="project" value="UniProtKB-KW"/>
</dbReference>
<dbReference type="GO" id="GO:0016743">
    <property type="term" value="F:carboxyl- or carbamoyltransferase activity"/>
    <property type="evidence" value="ECO:0007669"/>
    <property type="project" value="UniProtKB-UniRule"/>
</dbReference>
<dbReference type="GO" id="GO:0006633">
    <property type="term" value="P:fatty acid biosynthetic process"/>
    <property type="evidence" value="ECO:0007669"/>
    <property type="project" value="UniProtKB-KW"/>
</dbReference>
<dbReference type="GO" id="GO:2001295">
    <property type="term" value="P:malonyl-CoA biosynthetic process"/>
    <property type="evidence" value="ECO:0007669"/>
    <property type="project" value="UniProtKB-UniRule"/>
</dbReference>
<dbReference type="Gene3D" id="3.90.226.10">
    <property type="entry name" value="2-enoyl-CoA Hydratase, Chain A, domain 1"/>
    <property type="match status" value="1"/>
</dbReference>
<dbReference type="HAMAP" id="MF_00823">
    <property type="entry name" value="AcetylCoA_CT_alpha"/>
    <property type="match status" value="1"/>
</dbReference>
<dbReference type="InterPro" id="IPR001095">
    <property type="entry name" value="Acetyl_CoA_COase_a_su"/>
</dbReference>
<dbReference type="InterPro" id="IPR029045">
    <property type="entry name" value="ClpP/crotonase-like_dom_sf"/>
</dbReference>
<dbReference type="InterPro" id="IPR011763">
    <property type="entry name" value="COA_CT_C"/>
</dbReference>
<dbReference type="NCBIfam" id="TIGR00513">
    <property type="entry name" value="accA"/>
    <property type="match status" value="1"/>
</dbReference>
<dbReference type="NCBIfam" id="NF041504">
    <property type="entry name" value="AccA_sub"/>
    <property type="match status" value="1"/>
</dbReference>
<dbReference type="NCBIfam" id="NF004344">
    <property type="entry name" value="PRK05724.1"/>
    <property type="match status" value="1"/>
</dbReference>
<dbReference type="PANTHER" id="PTHR42853">
    <property type="entry name" value="ACETYL-COENZYME A CARBOXYLASE CARBOXYL TRANSFERASE SUBUNIT ALPHA"/>
    <property type="match status" value="1"/>
</dbReference>
<dbReference type="PANTHER" id="PTHR42853:SF3">
    <property type="entry name" value="ACETYL-COENZYME A CARBOXYLASE CARBOXYL TRANSFERASE SUBUNIT ALPHA, CHLOROPLASTIC"/>
    <property type="match status" value="1"/>
</dbReference>
<dbReference type="Pfam" id="PF03255">
    <property type="entry name" value="ACCA"/>
    <property type="match status" value="1"/>
</dbReference>
<dbReference type="PRINTS" id="PR01069">
    <property type="entry name" value="ACCCTRFRASEA"/>
</dbReference>
<dbReference type="SUPFAM" id="SSF52096">
    <property type="entry name" value="ClpP/crotonase"/>
    <property type="match status" value="1"/>
</dbReference>
<dbReference type="PROSITE" id="PS50989">
    <property type="entry name" value="COA_CT_CTER"/>
    <property type="match status" value="1"/>
</dbReference>
<evidence type="ECO:0000255" key="1">
    <source>
        <dbReference type="HAMAP-Rule" id="MF_00823"/>
    </source>
</evidence>
<evidence type="ECO:0000255" key="2">
    <source>
        <dbReference type="PROSITE-ProRule" id="PRU01137"/>
    </source>
</evidence>
<accession>B2FHN1</accession>
<feature type="chain" id="PRO_1000134526" description="Acetyl-coenzyme A carboxylase carboxyl transferase subunit alpha">
    <location>
        <begin position="1"/>
        <end position="319"/>
    </location>
</feature>
<feature type="domain" description="CoA carboxyltransferase C-terminal" evidence="2">
    <location>
        <begin position="38"/>
        <end position="293"/>
    </location>
</feature>
<keyword id="KW-0067">ATP-binding</keyword>
<keyword id="KW-0963">Cytoplasm</keyword>
<keyword id="KW-0275">Fatty acid biosynthesis</keyword>
<keyword id="KW-0276">Fatty acid metabolism</keyword>
<keyword id="KW-0444">Lipid biosynthesis</keyword>
<keyword id="KW-0443">Lipid metabolism</keyword>
<keyword id="KW-0547">Nucleotide-binding</keyword>
<keyword id="KW-1185">Reference proteome</keyword>
<keyword id="KW-0808">Transferase</keyword>
<comment type="function">
    <text evidence="1">Component of the acetyl coenzyme A carboxylase (ACC) complex. First, biotin carboxylase catalyzes the carboxylation of biotin on its carrier protein (BCCP) and then the CO(2) group is transferred by the carboxyltransferase to acetyl-CoA to form malonyl-CoA.</text>
</comment>
<comment type="catalytic activity">
    <reaction evidence="1">
        <text>N(6)-carboxybiotinyl-L-lysyl-[protein] + acetyl-CoA = N(6)-biotinyl-L-lysyl-[protein] + malonyl-CoA</text>
        <dbReference type="Rhea" id="RHEA:54728"/>
        <dbReference type="Rhea" id="RHEA-COMP:10505"/>
        <dbReference type="Rhea" id="RHEA-COMP:10506"/>
        <dbReference type="ChEBI" id="CHEBI:57288"/>
        <dbReference type="ChEBI" id="CHEBI:57384"/>
        <dbReference type="ChEBI" id="CHEBI:83144"/>
        <dbReference type="ChEBI" id="CHEBI:83145"/>
        <dbReference type="EC" id="2.1.3.15"/>
    </reaction>
</comment>
<comment type="pathway">
    <text evidence="1">Lipid metabolism; malonyl-CoA biosynthesis; malonyl-CoA from acetyl-CoA: step 1/1.</text>
</comment>
<comment type="subunit">
    <text evidence="1">Acetyl-CoA carboxylase is a heterohexamer composed of biotin carboxyl carrier protein (AccB), biotin carboxylase (AccC) and two subunits each of ACCase subunit alpha (AccA) and ACCase subunit beta (AccD).</text>
</comment>
<comment type="subcellular location">
    <subcellularLocation>
        <location evidence="1">Cytoplasm</location>
    </subcellularLocation>
</comment>
<comment type="similarity">
    <text evidence="1">Belongs to the AccA family.</text>
</comment>
<gene>
    <name evidence="1" type="primary">accA</name>
    <name type="ordered locus">Smlt1490</name>
</gene>